<dbReference type="EMBL" id="BA000017">
    <property type="protein sequence ID" value="BAB57398.1"/>
    <property type="molecule type" value="Genomic_DNA"/>
</dbReference>
<dbReference type="RefSeq" id="WP_000531320.1">
    <property type="nucleotide sequence ID" value="NC_002758.2"/>
</dbReference>
<dbReference type="PDB" id="1XSV">
    <property type="method" value="X-ray"/>
    <property type="resolution" value="1.70 A"/>
    <property type="chains" value="A/B=1-110"/>
</dbReference>
<dbReference type="PDBsum" id="1XSV"/>
<dbReference type="SMR" id="P67248"/>
<dbReference type="KEGG" id="sav:SAV1236"/>
<dbReference type="HOGENOM" id="CLU_129218_1_1_9"/>
<dbReference type="PhylomeDB" id="P67248"/>
<dbReference type="EvolutionaryTrace" id="P67248"/>
<dbReference type="Proteomes" id="UP000002481">
    <property type="component" value="Chromosome"/>
</dbReference>
<dbReference type="Gene3D" id="1.10.10.10">
    <property type="entry name" value="Winged helix-like DNA-binding domain superfamily/Winged helix DNA-binding domain"/>
    <property type="match status" value="1"/>
</dbReference>
<dbReference type="HAMAP" id="MF_00245">
    <property type="entry name" value="UPF0122"/>
    <property type="match status" value="1"/>
</dbReference>
<dbReference type="InterPro" id="IPR013324">
    <property type="entry name" value="RNA_pol_sigma_r3/r4-like"/>
</dbReference>
<dbReference type="InterPro" id="IPR007394">
    <property type="entry name" value="UPF0122"/>
</dbReference>
<dbReference type="InterPro" id="IPR054831">
    <property type="entry name" value="UPF0122_fam_protein"/>
</dbReference>
<dbReference type="InterPro" id="IPR036388">
    <property type="entry name" value="WH-like_DNA-bd_sf"/>
</dbReference>
<dbReference type="NCBIfam" id="NF001067">
    <property type="entry name" value="PRK00118.1-2"/>
    <property type="match status" value="1"/>
</dbReference>
<dbReference type="NCBIfam" id="NF001070">
    <property type="entry name" value="PRK00118.1-6"/>
    <property type="match status" value="1"/>
</dbReference>
<dbReference type="NCBIfam" id="NF045758">
    <property type="entry name" value="YlxM"/>
    <property type="match status" value="1"/>
</dbReference>
<dbReference type="PANTHER" id="PTHR40083">
    <property type="entry name" value="UPF0122 PROTEIN CBO2450/CLC_2298"/>
    <property type="match status" value="1"/>
</dbReference>
<dbReference type="PANTHER" id="PTHR40083:SF1">
    <property type="entry name" value="UPF0122 PROTEIN YLXM"/>
    <property type="match status" value="1"/>
</dbReference>
<dbReference type="Pfam" id="PF04297">
    <property type="entry name" value="UPF0122"/>
    <property type="match status" value="1"/>
</dbReference>
<dbReference type="SUPFAM" id="SSF88659">
    <property type="entry name" value="Sigma3 and sigma4 domains of RNA polymerase sigma factors"/>
    <property type="match status" value="1"/>
</dbReference>
<accession>P67248</accession>
<accession>Q99UN4</accession>
<reference key="1">
    <citation type="journal article" date="2001" name="Lancet">
        <title>Whole genome sequencing of meticillin-resistant Staphylococcus aureus.</title>
        <authorList>
            <person name="Kuroda M."/>
            <person name="Ohta T."/>
            <person name="Uchiyama I."/>
            <person name="Baba T."/>
            <person name="Yuzawa H."/>
            <person name="Kobayashi I."/>
            <person name="Cui L."/>
            <person name="Oguchi A."/>
            <person name="Aoki K."/>
            <person name="Nagai Y."/>
            <person name="Lian J.-Q."/>
            <person name="Ito T."/>
            <person name="Kanamori M."/>
            <person name="Matsumaru H."/>
            <person name="Maruyama A."/>
            <person name="Murakami H."/>
            <person name="Hosoyama A."/>
            <person name="Mizutani-Ui Y."/>
            <person name="Takahashi N.K."/>
            <person name="Sawano T."/>
            <person name="Inoue R."/>
            <person name="Kaito C."/>
            <person name="Sekimizu K."/>
            <person name="Hirakawa H."/>
            <person name="Kuhara S."/>
            <person name="Goto S."/>
            <person name="Yabuzaki J."/>
            <person name="Kanehisa M."/>
            <person name="Yamashita A."/>
            <person name="Oshima K."/>
            <person name="Furuya K."/>
            <person name="Yoshino C."/>
            <person name="Shiba T."/>
            <person name="Hattori M."/>
            <person name="Ogasawara N."/>
            <person name="Hayashi H."/>
            <person name="Hiramatsu K."/>
        </authorList>
    </citation>
    <scope>NUCLEOTIDE SEQUENCE [LARGE SCALE GENOMIC DNA]</scope>
    <source>
        <strain>Mu50 / ATCC 700699</strain>
    </source>
</reference>
<name>Y1236_STAAM</name>
<gene>
    <name type="ordered locus">SAV1236</name>
</gene>
<proteinExistence type="evidence at protein level"/>
<keyword id="KW-0002">3D-structure</keyword>
<organism>
    <name type="scientific">Staphylococcus aureus (strain Mu50 / ATCC 700699)</name>
    <dbReference type="NCBI Taxonomy" id="158878"/>
    <lineage>
        <taxon>Bacteria</taxon>
        <taxon>Bacillati</taxon>
        <taxon>Bacillota</taxon>
        <taxon>Bacilli</taxon>
        <taxon>Bacillales</taxon>
        <taxon>Staphylococcaceae</taxon>
        <taxon>Staphylococcus</taxon>
    </lineage>
</organism>
<evidence type="ECO:0000255" key="1">
    <source>
        <dbReference type="HAMAP-Rule" id="MF_00245"/>
    </source>
</evidence>
<evidence type="ECO:0007829" key="2">
    <source>
        <dbReference type="PDB" id="1XSV"/>
    </source>
</evidence>
<feature type="chain" id="PRO_0000211876" description="UPF0122 protein SAV1236">
    <location>
        <begin position="1"/>
        <end position="110"/>
    </location>
</feature>
<feature type="helix" evidence="2">
    <location>
        <begin position="6"/>
        <end position="19"/>
    </location>
</feature>
<feature type="helix" evidence="2">
    <location>
        <begin position="20"/>
        <end position="22"/>
    </location>
</feature>
<feature type="helix" evidence="2">
    <location>
        <begin position="25"/>
        <end position="35"/>
    </location>
</feature>
<feature type="helix" evidence="2">
    <location>
        <begin position="41"/>
        <end position="47"/>
    </location>
</feature>
<feature type="helix" evidence="2">
    <location>
        <begin position="52"/>
        <end position="73"/>
    </location>
</feature>
<feature type="helix" evidence="2">
    <location>
        <begin position="75"/>
        <end position="89"/>
    </location>
</feature>
<feature type="helix" evidence="2">
    <location>
        <begin position="96"/>
        <end position="109"/>
    </location>
</feature>
<protein>
    <recommendedName>
        <fullName evidence="1">UPF0122 protein SAV1236</fullName>
    </recommendedName>
</protein>
<sequence>MGQNDLVKTLRMNYLFDFYQSLLTNKQRNYLELFYLEDYSLSEIADTFNVSRQAVYDNIRRTGDLVEDYEKKLELYQKFEQRREIYDEMKQHLSNPEQIQRYIQQLEDLE</sequence>
<comment type="function">
    <text evidence="1">Might take part in the signal recognition particle (SRP) pathway. This is inferred from the conservation of its genetic proximity to ftsY/ffh. May be a regulatory protein.</text>
</comment>
<comment type="similarity">
    <text evidence="1">Belongs to the UPF0122 family.</text>
</comment>